<accession>A1JIB0</accession>
<name>GLPB_YERE8</name>
<gene>
    <name evidence="1" type="primary">glpB</name>
    <name type="ordered locus">YE0213</name>
</gene>
<reference key="1">
    <citation type="journal article" date="2006" name="PLoS Genet.">
        <title>The complete genome sequence and comparative genome analysis of the high pathogenicity Yersinia enterocolitica strain 8081.</title>
        <authorList>
            <person name="Thomson N.R."/>
            <person name="Howard S."/>
            <person name="Wren B.W."/>
            <person name="Holden M.T.G."/>
            <person name="Crossman L."/>
            <person name="Challis G.L."/>
            <person name="Churcher C."/>
            <person name="Mungall K."/>
            <person name="Brooks K."/>
            <person name="Chillingworth T."/>
            <person name="Feltwell T."/>
            <person name="Abdellah Z."/>
            <person name="Hauser H."/>
            <person name="Jagels K."/>
            <person name="Maddison M."/>
            <person name="Moule S."/>
            <person name="Sanders M."/>
            <person name="Whitehead S."/>
            <person name="Quail M.A."/>
            <person name="Dougan G."/>
            <person name="Parkhill J."/>
            <person name="Prentice M.B."/>
        </authorList>
    </citation>
    <scope>NUCLEOTIDE SEQUENCE [LARGE SCALE GENOMIC DNA]</scope>
    <source>
        <strain>NCTC 13174 / 8081</strain>
    </source>
</reference>
<dbReference type="EC" id="1.1.5.3" evidence="1"/>
<dbReference type="EMBL" id="AM286415">
    <property type="protein sequence ID" value="CAL10348.1"/>
    <property type="molecule type" value="Genomic_DNA"/>
</dbReference>
<dbReference type="RefSeq" id="WP_005176408.1">
    <property type="nucleotide sequence ID" value="NC_008800.1"/>
</dbReference>
<dbReference type="RefSeq" id="YP_001004600.1">
    <property type="nucleotide sequence ID" value="NC_008800.1"/>
</dbReference>
<dbReference type="KEGG" id="yen:YE0213"/>
<dbReference type="PATRIC" id="fig|393305.7.peg.305"/>
<dbReference type="eggNOG" id="COG3075">
    <property type="taxonomic scope" value="Bacteria"/>
</dbReference>
<dbReference type="HOGENOM" id="CLU_047793_0_0_6"/>
<dbReference type="OrthoDB" id="6395323at2"/>
<dbReference type="UniPathway" id="UPA00618">
    <property type="reaction ID" value="UER00673"/>
</dbReference>
<dbReference type="Proteomes" id="UP000000642">
    <property type="component" value="Chromosome"/>
</dbReference>
<dbReference type="GO" id="GO:0009331">
    <property type="term" value="C:glycerol-3-phosphate dehydrogenase (FAD) complex"/>
    <property type="evidence" value="ECO:0007669"/>
    <property type="project" value="InterPro"/>
</dbReference>
<dbReference type="GO" id="GO:0004368">
    <property type="term" value="F:glycerol-3-phosphate dehydrogenase (quinone) activity"/>
    <property type="evidence" value="ECO:0007669"/>
    <property type="project" value="UniProtKB-UniRule"/>
</dbReference>
<dbReference type="GO" id="GO:0019563">
    <property type="term" value="P:glycerol catabolic process"/>
    <property type="evidence" value="ECO:0007669"/>
    <property type="project" value="UniProtKB-UniRule"/>
</dbReference>
<dbReference type="Gene3D" id="3.50.50.60">
    <property type="entry name" value="FAD/NAD(P)-binding domain"/>
    <property type="match status" value="1"/>
</dbReference>
<dbReference type="HAMAP" id="MF_00753">
    <property type="entry name" value="Glycerol3P_GlpB"/>
    <property type="match status" value="1"/>
</dbReference>
<dbReference type="InterPro" id="IPR003953">
    <property type="entry name" value="FAD-dep_OxRdtase_2_FAD-bd"/>
</dbReference>
<dbReference type="InterPro" id="IPR036188">
    <property type="entry name" value="FAD/NAD-bd_sf"/>
</dbReference>
<dbReference type="InterPro" id="IPR009158">
    <property type="entry name" value="G3P_DH_GlpB_su"/>
</dbReference>
<dbReference type="NCBIfam" id="TIGR03378">
    <property type="entry name" value="glycerol3P_GlpB"/>
    <property type="match status" value="1"/>
</dbReference>
<dbReference type="NCBIfam" id="NF003718">
    <property type="entry name" value="PRK05329.1-1"/>
    <property type="match status" value="1"/>
</dbReference>
<dbReference type="NCBIfam" id="NF003719">
    <property type="entry name" value="PRK05329.1-2"/>
    <property type="match status" value="1"/>
</dbReference>
<dbReference type="NCBIfam" id="NF003720">
    <property type="entry name" value="PRK05329.1-3"/>
    <property type="match status" value="1"/>
</dbReference>
<dbReference type="NCBIfam" id="NF003721">
    <property type="entry name" value="PRK05329.1-4"/>
    <property type="match status" value="1"/>
</dbReference>
<dbReference type="PANTHER" id="PTHR43734:SF7">
    <property type="entry name" value="4,4'-DIAPONEUROSPORENE OXYGENASE"/>
    <property type="match status" value="1"/>
</dbReference>
<dbReference type="PANTHER" id="PTHR43734">
    <property type="entry name" value="PHYTOENE DESATURASE"/>
    <property type="match status" value="1"/>
</dbReference>
<dbReference type="Pfam" id="PF00890">
    <property type="entry name" value="FAD_binding_2"/>
    <property type="match status" value="1"/>
</dbReference>
<dbReference type="PIRSF" id="PIRSF000141">
    <property type="entry name" value="Anaerobic_G3P_dh"/>
    <property type="match status" value="1"/>
</dbReference>
<dbReference type="SUPFAM" id="SSF51905">
    <property type="entry name" value="FAD/NAD(P)-binding domain"/>
    <property type="match status" value="1"/>
</dbReference>
<protein>
    <recommendedName>
        <fullName evidence="1">Anaerobic glycerol-3-phosphate dehydrogenase subunit B</fullName>
        <shortName evidence="1">Anaerobic G-3-P dehydrogenase subunit B</shortName>
        <shortName evidence="1">Anaerobic G3Pdhase B</shortName>
        <ecNumber evidence="1">1.1.5.3</ecNumber>
    </recommendedName>
</protein>
<organism>
    <name type="scientific">Yersinia enterocolitica serotype O:8 / biotype 1B (strain NCTC 13174 / 8081)</name>
    <dbReference type="NCBI Taxonomy" id="393305"/>
    <lineage>
        <taxon>Bacteria</taxon>
        <taxon>Pseudomonadati</taxon>
        <taxon>Pseudomonadota</taxon>
        <taxon>Gammaproteobacteria</taxon>
        <taxon>Enterobacterales</taxon>
        <taxon>Yersiniaceae</taxon>
        <taxon>Yersinia</taxon>
    </lineage>
</organism>
<comment type="function">
    <text evidence="1">Conversion of glycerol 3-phosphate to dihydroxyacetone. Uses fumarate or nitrate as electron acceptor.</text>
</comment>
<comment type="catalytic activity">
    <reaction evidence="1">
        <text>a quinone + sn-glycerol 3-phosphate = dihydroxyacetone phosphate + a quinol</text>
        <dbReference type="Rhea" id="RHEA:18977"/>
        <dbReference type="ChEBI" id="CHEBI:24646"/>
        <dbReference type="ChEBI" id="CHEBI:57597"/>
        <dbReference type="ChEBI" id="CHEBI:57642"/>
        <dbReference type="ChEBI" id="CHEBI:132124"/>
        <dbReference type="EC" id="1.1.5.3"/>
    </reaction>
</comment>
<comment type="cofactor">
    <cofactor evidence="1">
        <name>FMN</name>
        <dbReference type="ChEBI" id="CHEBI:58210"/>
    </cofactor>
</comment>
<comment type="pathway">
    <text evidence="1">Polyol metabolism; glycerol degradation via glycerol kinase pathway; glycerone phosphate from sn-glycerol 3-phosphate (anaerobic route): step 1/1.</text>
</comment>
<comment type="subunit">
    <text evidence="1">Composed of a catalytic GlpA/B dimer and of membrane bound GlpC.</text>
</comment>
<comment type="similarity">
    <text evidence="1">Belongs to the anaerobic G-3-P dehydrogenase subunit B family.</text>
</comment>
<evidence type="ECO:0000255" key="1">
    <source>
        <dbReference type="HAMAP-Rule" id="MF_00753"/>
    </source>
</evidence>
<proteinExistence type="inferred from homology"/>
<keyword id="KW-0285">Flavoprotein</keyword>
<keyword id="KW-0288">FMN</keyword>
<keyword id="KW-0560">Oxidoreductase</keyword>
<sequence>MKFDVIIIGGGLAGLVCGIRLAEQGKYCAIVSAGQNALHFSSGSLDLLAKLPNGQAVSQPLSALETLAELAPEHPYSKMGQTGQVGELAQQAESLLSRCGLSLVGSAAKNHLRLTPLGNCRPTWLSPADIPVAPLEGPLPWQKVAVIGIEGFLDFQPQMVASALQEQGVEVTSDYLHLPALDRLRDNPSEFRAVNIARVLDLPENLQPLADELARLSSTAEMILLPACIGLDESAPLEALRAAVGKPIQLLPTLPPSLLGMRLHQALRHRFQQLGGIVMPGDAVLRAELVGNRITGLYSRNHGDIPLRAAQMVLASGSFFSNGLVATFEHVYEPILDLDILSLPNRADWSNSNMFAPQPYLQFGVNTDNRLRALRGGVALDNLHVIGAVLGGYDPLQQGCGAGVSLTSALFVAEQIVSAMEVTL</sequence>
<feature type="chain" id="PRO_1000046609" description="Anaerobic glycerol-3-phosphate dehydrogenase subunit B">
    <location>
        <begin position="1"/>
        <end position="424"/>
    </location>
</feature>